<sequence>MAKEKIRIRLKAYDHR</sequence>
<dbReference type="GO" id="GO:1990904">
    <property type="term" value="C:ribonucleoprotein complex"/>
    <property type="evidence" value="ECO:0007669"/>
    <property type="project" value="UniProtKB-KW"/>
</dbReference>
<dbReference type="GO" id="GO:0005840">
    <property type="term" value="C:ribosome"/>
    <property type="evidence" value="ECO:0007669"/>
    <property type="project" value="UniProtKB-KW"/>
</dbReference>
<proteinExistence type="evidence at protein level"/>
<protein>
    <recommendedName>
        <fullName evidence="3">Small ribosomal subunit protein uS10</fullName>
    </recommendedName>
    <alternativeName>
        <fullName>30S ribosomal protein S10</fullName>
    </alternativeName>
    <alternativeName>
        <fullName>BS13</fullName>
    </alternativeName>
</protein>
<reference key="1">
    <citation type="journal article" date="1974" name="FEBS Lett.">
        <title>Procaryotic ribosomal proteins: N-terminal sequence homologies and structural correspondence of 30 S ribosomal proteins from Escherichia coli and Bacillus stearothermophilus.</title>
        <authorList>
            <person name="Yaguchi M."/>
            <person name="Matheson A.T."/>
            <person name="Visentin L.P."/>
        </authorList>
    </citation>
    <scope>PROTEIN SEQUENCE OF 2-16</scope>
    <source>
        <strain>DSM 13240 / CIP 106956 / 10</strain>
    </source>
</reference>
<name>RS10_GEOSE</name>
<feature type="initiator methionine" description="Removed" evidence="2">
    <location>
        <position position="1"/>
    </location>
</feature>
<feature type="chain" id="PRO_0000146494" description="Small ribosomal subunit protein uS10">
    <location>
        <begin position="2"/>
        <end position="16" status="greater than"/>
    </location>
</feature>
<feature type="non-terminal residue">
    <location>
        <position position="16"/>
    </location>
</feature>
<keyword id="KW-0903">Direct protein sequencing</keyword>
<keyword id="KW-0687">Ribonucleoprotein</keyword>
<keyword id="KW-0689">Ribosomal protein</keyword>
<comment type="function">
    <text evidence="1">Involved in the binding of tRNA to the ribosomes.</text>
</comment>
<comment type="subunit">
    <text evidence="1">Part of the 30S ribosomal subunit.</text>
</comment>
<comment type="similarity">
    <text evidence="3">Belongs to the universal ribosomal protein uS10 family.</text>
</comment>
<organism>
    <name type="scientific">Geobacillus stearothermophilus</name>
    <name type="common">Bacillus stearothermophilus</name>
    <dbReference type="NCBI Taxonomy" id="1422"/>
    <lineage>
        <taxon>Bacteria</taxon>
        <taxon>Bacillati</taxon>
        <taxon>Bacillota</taxon>
        <taxon>Bacilli</taxon>
        <taxon>Bacillales</taxon>
        <taxon>Anoxybacillaceae</taxon>
        <taxon>Geobacillus</taxon>
    </lineage>
</organism>
<gene>
    <name type="primary">rpsJ</name>
</gene>
<evidence type="ECO:0000250" key="1"/>
<evidence type="ECO:0000269" key="2">
    <source>
    </source>
</evidence>
<evidence type="ECO:0000305" key="3"/>
<accession>P59683</accession>